<accession>A0A1E3B0R7</accession>
<name>CRIE_ASPCR</name>
<feature type="chain" id="PRO_0000456857" description="Cytochrome P450 monooxygenase criE">
    <location>
        <begin position="1"/>
        <end position="532"/>
    </location>
</feature>
<feature type="transmembrane region" description="Helical" evidence="5">
    <location>
        <begin position="18"/>
        <end position="38"/>
    </location>
</feature>
<feature type="binding site" description="axial binding residue" evidence="4">
    <location>
        <position position="441"/>
    </location>
    <ligand>
        <name>heme</name>
        <dbReference type="ChEBI" id="CHEBI:30413"/>
    </ligand>
    <ligandPart>
        <name>Fe</name>
        <dbReference type="ChEBI" id="CHEBI:18248"/>
    </ligandPart>
</feature>
<evidence type="ECO:0000250" key="1">
    <source>
        <dbReference type="UniProtKB" id="A0A017SP50"/>
    </source>
</evidence>
<evidence type="ECO:0000250" key="2">
    <source>
        <dbReference type="UniProtKB" id="A0A017SR40"/>
    </source>
</evidence>
<evidence type="ECO:0000250" key="3">
    <source>
        <dbReference type="UniProtKB" id="A0A2D1VNM2"/>
    </source>
</evidence>
<evidence type="ECO:0000250" key="4">
    <source>
        <dbReference type="UniProtKB" id="P04798"/>
    </source>
</evidence>
<evidence type="ECO:0000255" key="5"/>
<evidence type="ECO:0000269" key="6">
    <source>
    </source>
</evidence>
<evidence type="ECO:0000303" key="7">
    <source>
    </source>
</evidence>
<evidence type="ECO:0000305" key="8"/>
<comment type="function">
    <text evidence="1 2 3 6">Cytochrome P450 monooxygenase; part of the gene cluster that mediates the biosynthesis of echinulin family alkaloid (PubMed:35843946). The pathway begins with the biosynthesis of the cyclic dipeptide cyclo-L-Trp-L-Ala (cyclo-TA) by the NRPS criC via condensation of L-alanine and L-tryptophan (PubMed:35843946). The prenyltransferase criA then catalyzes the first prenylation step, a reverse prenylation reaction at C2, to yield preechinulin (By similarity). Preechinulin is the substrate of the cytochrome P450 monooxygenase criE that catalyzes the formation of the double bond between C10 and C11 to produce neoechulin A (By similarity). The unique prenyltransferase criF functions as a competitive enzyme with criE for preechinulin metabolization and uses preechinulin for effective regiospecific prenylations. Preechinulin is prenylated by criF at C5 or C7. C7-prenylation leads to accumulation of tardioxopiperazine B without further modification by criF. In contrast, the C5-prenylated tardioxopiperazine A can be prenylated again by criF, predominantly at C7 to form echinulin or less frequently at C4 to give variecolorin L. CriF also accepts neoechilunin A to produce varlecolorin G (prenylation at C5) or isoechinulin A (prenylation at C7). CriF further converts isoechinulin A into dehydroechinulin. Moreover, a yet unidentified enzyme can also convert neoechilunin A into neoechilunin B by introducing a double bond between positions C14 and C17 and thus provides a further substrate to criF for C5 and C7 prenylation (By similarity).</text>
</comment>
<comment type="catalytic activity">
    <reaction evidence="2">
        <text>preechinulin + reduced [NADPH--hemoprotein reductase] + O2 = neoechinulin A + oxidized [NADPH--hemoprotein reductase] + 2 H2O + H(+)</text>
        <dbReference type="Rhea" id="RHEA:73771"/>
        <dbReference type="Rhea" id="RHEA-COMP:11964"/>
        <dbReference type="Rhea" id="RHEA-COMP:11965"/>
        <dbReference type="ChEBI" id="CHEBI:15377"/>
        <dbReference type="ChEBI" id="CHEBI:15378"/>
        <dbReference type="ChEBI" id="CHEBI:15379"/>
        <dbReference type="ChEBI" id="CHEBI:57618"/>
        <dbReference type="ChEBI" id="CHEBI:58210"/>
        <dbReference type="ChEBI" id="CHEBI:193003"/>
        <dbReference type="ChEBI" id="CHEBI:193004"/>
    </reaction>
    <physiologicalReaction direction="left-to-right" evidence="2">
        <dbReference type="Rhea" id="RHEA:73772"/>
    </physiologicalReaction>
</comment>
<comment type="cofactor">
    <cofactor evidence="4">
        <name>heme</name>
        <dbReference type="ChEBI" id="CHEBI:30413"/>
    </cofactor>
</comment>
<comment type="pathway">
    <text evidence="2">Secondary metabolite biosynthesis.</text>
</comment>
<comment type="pathway">
    <text evidence="2">Alkaloid biosynthesis.</text>
</comment>
<comment type="subcellular location">
    <subcellularLocation>
        <location evidence="5">Membrane</location>
        <topology evidence="5">Single-pass membrane protein</topology>
    </subcellularLocation>
</comment>
<comment type="similarity">
    <text evidence="8">Belongs to the cytochrome P450 family.</text>
</comment>
<protein>
    <recommendedName>
        <fullName evidence="7">Cytochrome P450 monooxygenase criE</fullName>
        <ecNumber evidence="2">1.-.-.-</ecNumber>
    </recommendedName>
    <alternativeName>
        <fullName evidence="7">Echinulin biosynthesis cluster protein A</fullName>
    </alternativeName>
</protein>
<keyword id="KW-0349">Heme</keyword>
<keyword id="KW-0408">Iron</keyword>
<keyword id="KW-0472">Membrane</keyword>
<keyword id="KW-0479">Metal-binding</keyword>
<keyword id="KW-0503">Monooxygenase</keyword>
<keyword id="KW-0560">Oxidoreductase</keyword>
<keyword id="KW-1185">Reference proteome</keyword>
<keyword id="KW-0812">Transmembrane</keyword>
<keyword id="KW-1133">Transmembrane helix</keyword>
<reference key="1">
    <citation type="journal article" date="2016" name="BMC Genomics">
        <title>Comparative genomic and transcriptomic analyses of the Fuzhuan brick tea-fermentation fungus Aspergillus cristatus.</title>
        <authorList>
            <person name="Ge Y."/>
            <person name="Wang Y."/>
            <person name="Liu Y."/>
            <person name="Tan Y."/>
            <person name="Ren X."/>
            <person name="Zhang X."/>
            <person name="Hyde K.D."/>
            <person name="Liu Y."/>
            <person name="Liu Z."/>
        </authorList>
    </citation>
    <scope>NUCLEOTIDE SEQUENCE [LARGE SCALE GENOMIC DNA]</scope>
    <source>
        <strain>GZAAS20.1005</strain>
    </source>
</reference>
<reference key="2">
    <citation type="journal article" date="2022" name="Microb. Cell Fact.">
        <title>Efficient production of a cyclic dipeptide (cyclo-TA) using heterologous expression system of filamentous fungus Aspergillus oryzae.</title>
        <authorList>
            <person name="Qi J."/>
            <person name="Han H."/>
            <person name="Sui D."/>
            <person name="Tan S."/>
            <person name="Liu C."/>
            <person name="Wang P."/>
            <person name="Xie C."/>
            <person name="Xia X."/>
            <person name="Gao J.M."/>
            <person name="Liu C."/>
        </authorList>
    </citation>
    <scope>FUNCTION</scope>
</reference>
<dbReference type="EC" id="1.-.-.-" evidence="2"/>
<dbReference type="EMBL" id="JXNT01000024">
    <property type="protein sequence ID" value="ODM14525.1"/>
    <property type="molecule type" value="Genomic_DNA"/>
</dbReference>
<dbReference type="SMR" id="A0A1E3B0R7"/>
<dbReference type="STRING" id="573508.A0A1E3B0R7"/>
<dbReference type="VEuPathDB" id="FungiDB:SI65_10011"/>
<dbReference type="OrthoDB" id="1470350at2759"/>
<dbReference type="Proteomes" id="UP000094569">
    <property type="component" value="Unassembled WGS sequence"/>
</dbReference>
<dbReference type="GO" id="GO:0016020">
    <property type="term" value="C:membrane"/>
    <property type="evidence" value="ECO:0007669"/>
    <property type="project" value="UniProtKB-SubCell"/>
</dbReference>
<dbReference type="GO" id="GO:0020037">
    <property type="term" value="F:heme binding"/>
    <property type="evidence" value="ECO:0007669"/>
    <property type="project" value="InterPro"/>
</dbReference>
<dbReference type="GO" id="GO:0005506">
    <property type="term" value="F:iron ion binding"/>
    <property type="evidence" value="ECO:0007669"/>
    <property type="project" value="InterPro"/>
</dbReference>
<dbReference type="GO" id="GO:0004497">
    <property type="term" value="F:monooxygenase activity"/>
    <property type="evidence" value="ECO:0007669"/>
    <property type="project" value="UniProtKB-KW"/>
</dbReference>
<dbReference type="GO" id="GO:0016705">
    <property type="term" value="F:oxidoreductase activity, acting on paired donors, with incorporation or reduction of molecular oxygen"/>
    <property type="evidence" value="ECO:0007669"/>
    <property type="project" value="InterPro"/>
</dbReference>
<dbReference type="CDD" id="cd11065">
    <property type="entry name" value="CYP64-like"/>
    <property type="match status" value="1"/>
</dbReference>
<dbReference type="Gene3D" id="1.10.630.10">
    <property type="entry name" value="Cytochrome P450"/>
    <property type="match status" value="1"/>
</dbReference>
<dbReference type="InterPro" id="IPR001128">
    <property type="entry name" value="Cyt_P450"/>
</dbReference>
<dbReference type="InterPro" id="IPR017972">
    <property type="entry name" value="Cyt_P450_CS"/>
</dbReference>
<dbReference type="InterPro" id="IPR002401">
    <property type="entry name" value="Cyt_P450_E_grp-I"/>
</dbReference>
<dbReference type="InterPro" id="IPR036396">
    <property type="entry name" value="Cyt_P450_sf"/>
</dbReference>
<dbReference type="InterPro" id="IPR050364">
    <property type="entry name" value="Cytochrome_P450_fung"/>
</dbReference>
<dbReference type="PANTHER" id="PTHR46300:SF1">
    <property type="entry name" value="P450, PUTATIVE (EUROFUNG)-RELATED"/>
    <property type="match status" value="1"/>
</dbReference>
<dbReference type="PANTHER" id="PTHR46300">
    <property type="entry name" value="P450, PUTATIVE (EUROFUNG)-RELATED-RELATED"/>
    <property type="match status" value="1"/>
</dbReference>
<dbReference type="Pfam" id="PF00067">
    <property type="entry name" value="p450"/>
    <property type="match status" value="1"/>
</dbReference>
<dbReference type="PRINTS" id="PR00463">
    <property type="entry name" value="EP450I"/>
</dbReference>
<dbReference type="PRINTS" id="PR00385">
    <property type="entry name" value="P450"/>
</dbReference>
<dbReference type="SUPFAM" id="SSF48264">
    <property type="entry name" value="Cytochrome P450"/>
    <property type="match status" value="1"/>
</dbReference>
<dbReference type="PROSITE" id="PS00086">
    <property type="entry name" value="CYTOCHROME_P450"/>
    <property type="match status" value="1"/>
</dbReference>
<gene>
    <name evidence="7" type="primary">criE</name>
    <name type="ORF">SI65_10011</name>
</gene>
<organism>
    <name type="scientific">Aspergillus cristatus</name>
    <name type="common">Chinese Fuzhuan brick tea-fermentation fungus</name>
    <name type="synonym">Eurotium cristatum</name>
    <dbReference type="NCBI Taxonomy" id="573508"/>
    <lineage>
        <taxon>Eukaryota</taxon>
        <taxon>Fungi</taxon>
        <taxon>Dikarya</taxon>
        <taxon>Ascomycota</taxon>
        <taxon>Pezizomycotina</taxon>
        <taxon>Eurotiomycetes</taxon>
        <taxon>Eurotiomycetidae</taxon>
        <taxon>Eurotiales</taxon>
        <taxon>Aspergillaceae</taxon>
        <taxon>Aspergillus</taxon>
        <taxon>Aspergillus subgen. Aspergillus</taxon>
    </lineage>
</organism>
<proteinExistence type="inferred from homology"/>
<sequence length="532" mass="60566">MWDSPIIFTRMRELVQSVSPAALSWAVVAVYIGTFFWLKSRSSKQRLPLPPGPRGLPLIGNSFQTPAVNPWEKYKEWSDEYGPVMTLSLGLTTTIILSSHQVANDLMEKKSTIYSSRPQLVMFNRLSGGMNSSGMEYGKRWRDHRSLQASVLRPWMTQRYTALRDVETKQLLAELLKTDDFSSCFKRMVASLFMTLAYGKRVQYPDDPEIRGMEELVRVKSEAGEASFRATGQLVEYIPLLQYLPSFLTPWKEMCDRICEQFNKTFVDRLREGINAPAWTWAKEVSKHKVARPMSELEVSYTLGTLYEASLTSQQILRIIVLVAALYPEKAAKAQEELDKVVGADRLPAAADVRNLPYIDAFVKEALRWRPFAPLGAPRESIRDVEYNGYLIPKGATILVNQWALDYNEDVFPEPFSFLPERWIANPDLPFSTFGFGQRGCPGRYFAQDSLFISTARLLWAFNIRTASPVEVEDMLRNPSAGAFLSPIPEFDATFAARDAQRKALIEKEWEIAPKESYAILREVEKELTSEA</sequence>